<accession>P61925</accession>
<accession>P04541</accession>
<accession>Q6IAV2</accession>
<feature type="initiator methionine" description="Removed" evidence="4">
    <location>
        <position position="1"/>
    </location>
</feature>
<feature type="chain" id="PRO_0000154532" description="cAMP-dependent protein kinase inhibitor alpha">
    <location>
        <begin position="2"/>
        <end position="76"/>
    </location>
</feature>
<feature type="region of interest" description="Disordered" evidence="2">
    <location>
        <begin position="49"/>
        <end position="76"/>
    </location>
</feature>
<feature type="site" description="Important for inhibition" evidence="1">
    <location>
        <position position="16"/>
    </location>
</feature>
<feature type="site" description="Important for inhibition" evidence="1">
    <location>
        <position position="19"/>
    </location>
</feature>
<feature type="site" description="Important for inhibition" evidence="1">
    <location>
        <position position="20"/>
    </location>
</feature>
<feature type="modified residue" description="N-acetylthreonine" evidence="4">
    <location>
        <position position="2"/>
    </location>
</feature>
<feature type="helix" evidence="9">
    <location>
        <begin position="7"/>
        <end position="13"/>
    </location>
</feature>
<feature type="helix" evidence="5">
    <location>
        <begin position="15"/>
        <end position="17"/>
    </location>
</feature>
<feature type="strand" evidence="8">
    <location>
        <begin position="23"/>
        <end position="25"/>
    </location>
</feature>
<feature type="helix" evidence="7">
    <location>
        <begin position="36"/>
        <end position="43"/>
    </location>
</feature>
<feature type="strand" evidence="6">
    <location>
        <begin position="47"/>
        <end position="49"/>
    </location>
</feature>
<organism>
    <name type="scientific">Homo sapiens</name>
    <name type="common">Human</name>
    <dbReference type="NCBI Taxonomy" id="9606"/>
    <lineage>
        <taxon>Eukaryota</taxon>
        <taxon>Metazoa</taxon>
        <taxon>Chordata</taxon>
        <taxon>Craniata</taxon>
        <taxon>Vertebrata</taxon>
        <taxon>Euteleostomi</taxon>
        <taxon>Mammalia</taxon>
        <taxon>Eutheria</taxon>
        <taxon>Euarchontoglires</taxon>
        <taxon>Primates</taxon>
        <taxon>Haplorrhini</taxon>
        <taxon>Catarrhini</taxon>
        <taxon>Hominidae</taxon>
        <taxon>Homo</taxon>
    </lineage>
</organism>
<keyword id="KW-0002">3D-structure</keyword>
<keyword id="KW-0007">Acetylation</keyword>
<keyword id="KW-0649">Protein kinase inhibitor</keyword>
<keyword id="KW-1267">Proteomics identification</keyword>
<keyword id="KW-1185">Reference proteome</keyword>
<name>IPKA_HUMAN</name>
<dbReference type="EMBL" id="S76965">
    <property type="protein sequence ID" value="AAB21141.1"/>
    <property type="molecule type" value="mRNA"/>
</dbReference>
<dbReference type="EMBL" id="AF234641">
    <property type="protein sequence ID" value="AAF40206.1"/>
    <property type="molecule type" value="Genomic_DNA"/>
</dbReference>
<dbReference type="EMBL" id="CR457052">
    <property type="protein sequence ID" value="CAG33333.1"/>
    <property type="molecule type" value="mRNA"/>
</dbReference>
<dbReference type="EMBL" id="BC022265">
    <property type="protein sequence ID" value="AAH22265.1"/>
    <property type="molecule type" value="mRNA"/>
</dbReference>
<dbReference type="CCDS" id="CCDS6222.1"/>
<dbReference type="PIR" id="A40468">
    <property type="entry name" value="A40468"/>
</dbReference>
<dbReference type="RefSeq" id="NP_006814.1">
    <property type="nucleotide sequence ID" value="NM_006823.4"/>
</dbReference>
<dbReference type="RefSeq" id="NP_862822.1">
    <property type="nucleotide sequence ID" value="NM_181839.3"/>
</dbReference>
<dbReference type="RefSeq" id="XP_016869109.1">
    <property type="nucleotide sequence ID" value="XM_017013620.1"/>
</dbReference>
<dbReference type="RefSeq" id="XP_016869110.1">
    <property type="nucleotide sequence ID" value="XM_017013621.2"/>
</dbReference>
<dbReference type="RefSeq" id="XP_016869111.1">
    <property type="nucleotide sequence ID" value="XM_017013622.2"/>
</dbReference>
<dbReference type="RefSeq" id="XP_047277909.1">
    <property type="nucleotide sequence ID" value="XM_047421953.1"/>
</dbReference>
<dbReference type="RefSeq" id="XP_054216762.1">
    <property type="nucleotide sequence ID" value="XM_054360787.1"/>
</dbReference>
<dbReference type="RefSeq" id="XP_054216763.1">
    <property type="nucleotide sequence ID" value="XM_054360788.1"/>
</dbReference>
<dbReference type="RefSeq" id="XP_054216764.1">
    <property type="nucleotide sequence ID" value="XM_054360789.1"/>
</dbReference>
<dbReference type="RefSeq" id="XP_054216765.1">
    <property type="nucleotide sequence ID" value="XM_054360790.1"/>
</dbReference>
<dbReference type="RefSeq" id="XP_054216766.1">
    <property type="nucleotide sequence ID" value="XM_054360791.1"/>
</dbReference>
<dbReference type="PDB" id="1CMK">
    <property type="method" value="X-ray"/>
    <property type="resolution" value="2.90 A"/>
    <property type="chains" value="I=6-27"/>
</dbReference>
<dbReference type="PDB" id="1JLU">
    <property type="method" value="X-ray"/>
    <property type="resolution" value="2.25 A"/>
    <property type="chains" value="S=6-25"/>
</dbReference>
<dbReference type="PDB" id="1Q8T">
    <property type="method" value="X-ray"/>
    <property type="resolution" value="2.00 A"/>
    <property type="chains" value="B=6-25"/>
</dbReference>
<dbReference type="PDB" id="1VEB">
    <property type="method" value="X-ray"/>
    <property type="resolution" value="2.89 A"/>
    <property type="chains" value="B=6-25"/>
</dbReference>
<dbReference type="PDB" id="1XH4">
    <property type="method" value="X-ray"/>
    <property type="resolution" value="2.45 A"/>
    <property type="chains" value="B=6-25"/>
</dbReference>
<dbReference type="PDB" id="1XH5">
    <property type="method" value="X-ray"/>
    <property type="resolution" value="2.05 A"/>
    <property type="chains" value="B=6-25"/>
</dbReference>
<dbReference type="PDB" id="1XH6">
    <property type="method" value="X-ray"/>
    <property type="resolution" value="1.90 A"/>
    <property type="chains" value="B=6-25"/>
</dbReference>
<dbReference type="PDB" id="1XH7">
    <property type="method" value="X-ray"/>
    <property type="resolution" value="2.47 A"/>
    <property type="chains" value="B=6-25"/>
</dbReference>
<dbReference type="PDB" id="1XH8">
    <property type="method" value="X-ray"/>
    <property type="resolution" value="1.60 A"/>
    <property type="chains" value="B=6-25"/>
</dbReference>
<dbReference type="PDB" id="1XH9">
    <property type="method" value="X-ray"/>
    <property type="resolution" value="1.64 A"/>
    <property type="chains" value="B=6-25"/>
</dbReference>
<dbReference type="PDB" id="1XHA">
    <property type="method" value="X-ray"/>
    <property type="resolution" value="2.46 A"/>
    <property type="chains" value="B=6-25"/>
</dbReference>
<dbReference type="PDB" id="1YDR">
    <property type="method" value="X-ray"/>
    <property type="resolution" value="2.20 A"/>
    <property type="chains" value="I=6-25"/>
</dbReference>
<dbReference type="PDB" id="2C1A">
    <property type="method" value="X-ray"/>
    <property type="resolution" value="1.95 A"/>
    <property type="chains" value="I=6-25"/>
</dbReference>
<dbReference type="PDB" id="2C1B">
    <property type="method" value="X-ray"/>
    <property type="resolution" value="2.00 A"/>
    <property type="chains" value="I=6-25"/>
</dbReference>
<dbReference type="PDB" id="2F7E">
    <property type="method" value="X-ray"/>
    <property type="resolution" value="2.00 A"/>
    <property type="chains" value="I=6-25"/>
</dbReference>
<dbReference type="PDB" id="2GNI">
    <property type="method" value="X-ray"/>
    <property type="resolution" value="2.27 A"/>
    <property type="chains" value="I=6-25"/>
</dbReference>
<dbReference type="PDB" id="2JDS">
    <property type="method" value="X-ray"/>
    <property type="resolution" value="2.00 A"/>
    <property type="chains" value="I=6-25"/>
</dbReference>
<dbReference type="PDB" id="2JDT">
    <property type="method" value="X-ray"/>
    <property type="resolution" value="2.15 A"/>
    <property type="chains" value="I=6-25"/>
</dbReference>
<dbReference type="PDB" id="2JDV">
    <property type="method" value="X-ray"/>
    <property type="resolution" value="2.08 A"/>
    <property type="chains" value="I=6-25"/>
</dbReference>
<dbReference type="PDB" id="2L1L">
    <property type="method" value="NMR"/>
    <property type="chains" value="A=30-54"/>
</dbReference>
<dbReference type="PDB" id="2UVX">
    <property type="method" value="X-ray"/>
    <property type="resolution" value="2.00 A"/>
    <property type="chains" value="I=6-25"/>
</dbReference>
<dbReference type="PDB" id="2UVY">
    <property type="method" value="X-ray"/>
    <property type="resolution" value="1.95 A"/>
    <property type="chains" value="I=6-25"/>
</dbReference>
<dbReference type="PDB" id="2UVZ">
    <property type="method" value="X-ray"/>
    <property type="resolution" value="1.94 A"/>
    <property type="chains" value="I=6-25"/>
</dbReference>
<dbReference type="PDB" id="2UW0">
    <property type="method" value="X-ray"/>
    <property type="resolution" value="2.00 A"/>
    <property type="chains" value="I=6-25"/>
</dbReference>
<dbReference type="PDB" id="2UW3">
    <property type="method" value="X-ray"/>
    <property type="resolution" value="2.19 A"/>
    <property type="chains" value="I=6-25"/>
</dbReference>
<dbReference type="PDB" id="2UW4">
    <property type="method" value="X-ray"/>
    <property type="resolution" value="2.00 A"/>
    <property type="chains" value="I=6-25"/>
</dbReference>
<dbReference type="PDB" id="2UW5">
    <property type="method" value="X-ray"/>
    <property type="resolution" value="2.14 A"/>
    <property type="chains" value="I=6-25"/>
</dbReference>
<dbReference type="PDB" id="2UW6">
    <property type="method" value="X-ray"/>
    <property type="resolution" value="2.23 A"/>
    <property type="chains" value="I=6-25"/>
</dbReference>
<dbReference type="PDB" id="2UW7">
    <property type="method" value="X-ray"/>
    <property type="resolution" value="2.10 A"/>
    <property type="chains" value="I=6-25"/>
</dbReference>
<dbReference type="PDB" id="2UW8">
    <property type="method" value="X-ray"/>
    <property type="resolution" value="2.00 A"/>
    <property type="chains" value="I=6-25"/>
</dbReference>
<dbReference type="PDB" id="2VNW">
    <property type="method" value="X-ray"/>
    <property type="resolution" value="2.09 A"/>
    <property type="chains" value="I=6-25"/>
</dbReference>
<dbReference type="PDB" id="2VNY">
    <property type="method" value="X-ray"/>
    <property type="resolution" value="1.96 A"/>
    <property type="chains" value="I=6-25"/>
</dbReference>
<dbReference type="PDB" id="2VO0">
    <property type="method" value="X-ray"/>
    <property type="resolution" value="1.94 A"/>
    <property type="chains" value="I=6-25"/>
</dbReference>
<dbReference type="PDB" id="2VO3">
    <property type="method" value="X-ray"/>
    <property type="resolution" value="1.98 A"/>
    <property type="chains" value="I=6-25"/>
</dbReference>
<dbReference type="PDB" id="2VO6">
    <property type="method" value="X-ray"/>
    <property type="resolution" value="1.97 A"/>
    <property type="chains" value="I=6-25"/>
</dbReference>
<dbReference type="PDB" id="2VO7">
    <property type="method" value="X-ray"/>
    <property type="resolution" value="1.98 A"/>
    <property type="chains" value="I=6-25"/>
</dbReference>
<dbReference type="PDB" id="3AMA">
    <property type="method" value="X-ray"/>
    <property type="resolution" value="1.75 A"/>
    <property type="chains" value="B=6-25"/>
</dbReference>
<dbReference type="PDB" id="3AMB">
    <property type="method" value="X-ray"/>
    <property type="resolution" value="2.25 A"/>
    <property type="chains" value="B=6-25"/>
</dbReference>
<dbReference type="PDB" id="3L9L">
    <property type="method" value="X-ray"/>
    <property type="resolution" value="2.00 A"/>
    <property type="chains" value="C/D=6-25"/>
</dbReference>
<dbReference type="PDB" id="3L9M">
    <property type="method" value="X-ray"/>
    <property type="resolution" value="1.90 A"/>
    <property type="chains" value="C/D=6-25"/>
</dbReference>
<dbReference type="PDB" id="3L9N">
    <property type="method" value="X-ray"/>
    <property type="resolution" value="2.00 A"/>
    <property type="chains" value="C=6-25"/>
</dbReference>
<dbReference type="PDB" id="3MVJ">
    <property type="method" value="X-ray"/>
    <property type="resolution" value="2.49 A"/>
    <property type="chains" value="I/J/K=6-25"/>
</dbReference>
<dbReference type="PDB" id="3NX8">
    <property type="method" value="X-ray"/>
    <property type="resolution" value="2.00 A"/>
    <property type="chains" value="B=6-25"/>
</dbReference>
<dbReference type="PDB" id="3OOG">
    <property type="method" value="X-ray"/>
    <property type="resolution" value="2.00 A"/>
    <property type="chains" value="B=6-25"/>
</dbReference>
<dbReference type="PDB" id="3OVV">
    <property type="method" value="X-ray"/>
    <property type="resolution" value="1.58 A"/>
    <property type="chains" value="B=6-25"/>
</dbReference>
<dbReference type="PDB" id="3OWP">
    <property type="method" value="X-ray"/>
    <property type="resolution" value="1.88 A"/>
    <property type="chains" value="B=6-25"/>
</dbReference>
<dbReference type="PDB" id="3OXT">
    <property type="method" value="X-ray"/>
    <property type="resolution" value="2.20 A"/>
    <property type="chains" value="B=6-25"/>
</dbReference>
<dbReference type="PDB" id="3P0M">
    <property type="method" value="X-ray"/>
    <property type="resolution" value="2.03 A"/>
    <property type="chains" value="B=6-25"/>
</dbReference>
<dbReference type="PDB" id="3POO">
    <property type="method" value="X-ray"/>
    <property type="resolution" value="1.60 A"/>
    <property type="chains" value="B=6-25"/>
</dbReference>
<dbReference type="PDB" id="3VQH">
    <property type="method" value="X-ray"/>
    <property type="resolution" value="1.95 A"/>
    <property type="chains" value="B=6-25"/>
</dbReference>
<dbReference type="PDB" id="3WYG">
    <property type="method" value="X-ray"/>
    <property type="resolution" value="2.15 A"/>
    <property type="chains" value="D=1-76"/>
</dbReference>
<dbReference type="PDB" id="3X2U">
    <property type="method" value="X-ray"/>
    <property type="resolution" value="2.40 A"/>
    <property type="chains" value="S=6-25"/>
</dbReference>
<dbReference type="PDB" id="3X2V">
    <property type="method" value="X-ray"/>
    <property type="resolution" value="1.77 A"/>
    <property type="chains" value="S=6-25"/>
</dbReference>
<dbReference type="PDB" id="3X2W">
    <property type="method" value="X-ray"/>
    <property type="resolution" value="1.70 A"/>
    <property type="chains" value="S=6-25"/>
</dbReference>
<dbReference type="PDB" id="4AXA">
    <property type="method" value="X-ray"/>
    <property type="resolution" value="1.90 A"/>
    <property type="chains" value="I=6-25"/>
</dbReference>
<dbReference type="PDB" id="4IAC">
    <property type="method" value="X-ray"/>
    <property type="resolution" value="2.15 A"/>
    <property type="chains" value="S=6-25"/>
</dbReference>
<dbReference type="PDB" id="4IAD">
    <property type="method" value="X-ray"/>
    <property type="resolution" value="1.90 A"/>
    <property type="chains" value="S=6-25"/>
</dbReference>
<dbReference type="PDB" id="4IAF">
    <property type="method" value="X-ray"/>
    <property type="resolution" value="2.20 A"/>
    <property type="chains" value="S=6-25"/>
</dbReference>
<dbReference type="PDB" id="4IAI">
    <property type="method" value="X-ray"/>
    <property type="resolution" value="1.55 A"/>
    <property type="chains" value="S=6-25"/>
</dbReference>
<dbReference type="PDB" id="4IAK">
    <property type="method" value="X-ray"/>
    <property type="resolution" value="1.60 A"/>
    <property type="chains" value="S=6-25"/>
</dbReference>
<dbReference type="PDB" id="4IAY">
    <property type="method" value="X-ray"/>
    <property type="resolution" value="2.00 A"/>
    <property type="chains" value="S=6-25"/>
</dbReference>
<dbReference type="PDB" id="4IAZ">
    <property type="method" value="X-ray"/>
    <property type="resolution" value="1.85 A"/>
    <property type="chains" value="S=6-25"/>
</dbReference>
<dbReference type="PDB" id="4IB0">
    <property type="method" value="X-ray"/>
    <property type="resolution" value="1.87 A"/>
    <property type="chains" value="S=6-25"/>
</dbReference>
<dbReference type="PDB" id="4IB1">
    <property type="method" value="X-ray"/>
    <property type="resolution" value="1.63 A"/>
    <property type="chains" value="S=6-25"/>
</dbReference>
<dbReference type="PDB" id="4IB3">
    <property type="method" value="X-ray"/>
    <property type="resolution" value="2.20 A"/>
    <property type="chains" value="S=6-25"/>
</dbReference>
<dbReference type="PDB" id="4IE9">
    <property type="method" value="X-ray"/>
    <property type="resolution" value="1.92 A"/>
    <property type="chains" value="I=6-25"/>
</dbReference>
<dbReference type="PDB" id="4IJ9">
    <property type="method" value="X-ray"/>
    <property type="resolution" value="2.55 A"/>
    <property type="chains" value="I=6-25"/>
</dbReference>
<dbReference type="PDB" id="4O21">
    <property type="method" value="X-ray"/>
    <property type="resolution" value="1.95 A"/>
    <property type="chains" value="S=6-25"/>
</dbReference>
<dbReference type="PDB" id="4O22">
    <property type="method" value="X-ray"/>
    <property type="resolution" value="1.70 A"/>
    <property type="chains" value="S=6-25"/>
</dbReference>
<dbReference type="PDB" id="4UJ1">
    <property type="method" value="X-ray"/>
    <property type="resolution" value="1.77 A"/>
    <property type="chains" value="B=6-25"/>
</dbReference>
<dbReference type="PDB" id="4UJ2">
    <property type="method" value="X-ray"/>
    <property type="resolution" value="2.02 A"/>
    <property type="chains" value="B=6-25"/>
</dbReference>
<dbReference type="PDB" id="4UJ9">
    <property type="method" value="X-ray"/>
    <property type="resolution" value="1.87 A"/>
    <property type="chains" value="B=6-25"/>
</dbReference>
<dbReference type="PDB" id="4UJA">
    <property type="method" value="X-ray"/>
    <property type="resolution" value="1.93 A"/>
    <property type="chains" value="B=6-25"/>
</dbReference>
<dbReference type="PDB" id="4UJB">
    <property type="method" value="X-ray"/>
    <property type="resolution" value="1.95 A"/>
    <property type="chains" value="B=6-25"/>
</dbReference>
<dbReference type="PDB" id="4WB5">
    <property type="method" value="X-ray"/>
    <property type="resolution" value="1.64 A"/>
    <property type="chains" value="I=6-25"/>
</dbReference>
<dbReference type="PDB" id="4WB6">
    <property type="method" value="X-ray"/>
    <property type="resolution" value="2.10 A"/>
    <property type="chains" value="I/J=6-25"/>
</dbReference>
<dbReference type="PDB" id="4WB7">
    <property type="method" value="X-ray"/>
    <property type="resolution" value="1.90 A"/>
    <property type="chains" value="I/J=6-25"/>
</dbReference>
<dbReference type="PDB" id="4WB8">
    <property type="method" value="X-ray"/>
    <property type="resolution" value="1.55 A"/>
    <property type="chains" value="I=6-25"/>
</dbReference>
<dbReference type="PDB" id="4Z83">
    <property type="method" value="X-ray"/>
    <property type="resolution" value="1.80 A"/>
    <property type="chains" value="I=6-25"/>
</dbReference>
<dbReference type="PDB" id="4Z84">
    <property type="method" value="X-ray"/>
    <property type="resolution" value="1.55 A"/>
    <property type="chains" value="I=6-25"/>
</dbReference>
<dbReference type="PDB" id="5BX6">
    <property type="method" value="X-ray"/>
    <property type="resolution" value="1.89 A"/>
    <property type="chains" value="B=6-25"/>
</dbReference>
<dbReference type="PDB" id="5BX7">
    <property type="method" value="X-ray"/>
    <property type="resolution" value="1.89 A"/>
    <property type="chains" value="B=6-25"/>
</dbReference>
<dbReference type="PDB" id="5DH9">
    <property type="method" value="X-ray"/>
    <property type="resolution" value="2.55 A"/>
    <property type="chains" value="D=36-46"/>
</dbReference>
<dbReference type="PDB" id="5LCP">
    <property type="method" value="X-ray"/>
    <property type="resolution" value="1.43 A"/>
    <property type="chains" value="B=6-25"/>
</dbReference>
<dbReference type="PDB" id="5LCQ">
    <property type="method" value="X-ray"/>
    <property type="resolution" value="1.42 A"/>
    <property type="chains" value="B=6-25"/>
</dbReference>
<dbReference type="PDB" id="5LCR">
    <property type="method" value="X-ray"/>
    <property type="resolution" value="1.56 A"/>
    <property type="chains" value="B=6-25"/>
</dbReference>
<dbReference type="PDB" id="5LCT">
    <property type="method" value="X-ray"/>
    <property type="resolution" value="1.61 A"/>
    <property type="chains" value="B=6-25"/>
</dbReference>
<dbReference type="PDB" id="5LCU">
    <property type="method" value="X-ray"/>
    <property type="resolution" value="1.58 A"/>
    <property type="chains" value="B=6-25"/>
</dbReference>
<dbReference type="PDB" id="5M0B">
    <property type="method" value="X-ray"/>
    <property type="resolution" value="1.51 A"/>
    <property type="chains" value="B=6-25"/>
</dbReference>
<dbReference type="PDB" id="5M0C">
    <property type="method" value="X-ray"/>
    <property type="resolution" value="1.73 A"/>
    <property type="chains" value="B=6-25"/>
</dbReference>
<dbReference type="PDB" id="5M0L">
    <property type="method" value="X-ray"/>
    <property type="resolution" value="1.47 A"/>
    <property type="chains" value="B=6-25"/>
</dbReference>
<dbReference type="PDB" id="5M0U">
    <property type="method" value="X-ray"/>
    <property type="resolution" value="1.67 A"/>
    <property type="chains" value="B=6-25"/>
</dbReference>
<dbReference type="PDB" id="5M6V">
    <property type="method" value="X-ray"/>
    <property type="resolution" value="1.42 A"/>
    <property type="chains" value="B=6-25"/>
</dbReference>
<dbReference type="PDB" id="5M6Y">
    <property type="method" value="X-ray"/>
    <property type="resolution" value="1.37 A"/>
    <property type="chains" value="B=6-25"/>
</dbReference>
<dbReference type="PDB" id="5M71">
    <property type="method" value="X-ray"/>
    <property type="resolution" value="1.49 A"/>
    <property type="chains" value="B=6-25"/>
</dbReference>
<dbReference type="PDB" id="5M75">
    <property type="method" value="X-ray"/>
    <property type="resolution" value="1.54 A"/>
    <property type="chains" value="B=6-25"/>
</dbReference>
<dbReference type="PDB" id="5N23">
    <property type="method" value="X-ray"/>
    <property type="resolution" value="2.09 A"/>
    <property type="chains" value="B=6-25"/>
</dbReference>
<dbReference type="PDB" id="5XOJ">
    <property type="method" value="X-ray"/>
    <property type="resolution" value="2.20 A"/>
    <property type="chains" value="D=1-76"/>
</dbReference>
<dbReference type="PDB" id="6E21">
    <property type="method" value="Other"/>
    <property type="resolution" value="2.00 A"/>
    <property type="chains" value="B=6-25"/>
</dbReference>
<dbReference type="PDB" id="6E99">
    <property type="method" value="X-ray"/>
    <property type="resolution" value="1.88 A"/>
    <property type="chains" value="B=6-23"/>
</dbReference>
<dbReference type="PDB" id="6E9L">
    <property type="method" value="X-ray"/>
    <property type="resolution" value="2.80 A"/>
    <property type="chains" value="B=6-23"/>
</dbReference>
<dbReference type="PDB" id="6FRX">
    <property type="method" value="X-ray"/>
    <property type="resolution" value="1.88 A"/>
    <property type="chains" value="B=6-25"/>
</dbReference>
<dbReference type="PDB" id="6QJ7">
    <property type="method" value="X-ray"/>
    <property type="resolution" value="1.69 A"/>
    <property type="chains" value="B=6-25"/>
</dbReference>
<dbReference type="PDB" id="6X2U">
    <property type="method" value="X-ray"/>
    <property type="resolution" value="2.20 A"/>
    <property type="chains" value="D=34-49"/>
</dbReference>
<dbReference type="PDB" id="6X2V">
    <property type="method" value="X-ray"/>
    <property type="resolution" value="2.82 A"/>
    <property type="chains" value="D=34-49"/>
</dbReference>
<dbReference type="PDB" id="6X2W">
    <property type="method" value="X-ray"/>
    <property type="resolution" value="3.00 A"/>
    <property type="chains" value="D=35-49"/>
</dbReference>
<dbReference type="PDB" id="7UJX">
    <property type="method" value="X-ray"/>
    <property type="resolution" value="2.40 A"/>
    <property type="chains" value="I=6-24"/>
</dbReference>
<dbReference type="PDB" id="7V0G">
    <property type="method" value="X-ray"/>
    <property type="resolution" value="1.63 A"/>
    <property type="chains" value="I=6-24"/>
</dbReference>
<dbReference type="PDB" id="8FE2">
    <property type="method" value="X-ray"/>
    <property type="resolution" value="2.34 A"/>
    <property type="chains" value="I/J=6-25"/>
</dbReference>
<dbReference type="PDB" id="8FE5">
    <property type="method" value="X-ray"/>
    <property type="resolution" value="2.51 A"/>
    <property type="chains" value="I/J=6-25"/>
</dbReference>
<dbReference type="PDB" id="8FEC">
    <property type="method" value="X-ray"/>
    <property type="resolution" value="2.70 A"/>
    <property type="chains" value="I/J=6-25"/>
</dbReference>
<dbReference type="PDBsum" id="1CMK"/>
<dbReference type="PDBsum" id="1JLU"/>
<dbReference type="PDBsum" id="1Q8T"/>
<dbReference type="PDBsum" id="1VEB"/>
<dbReference type="PDBsum" id="1XH4"/>
<dbReference type="PDBsum" id="1XH5"/>
<dbReference type="PDBsum" id="1XH6"/>
<dbReference type="PDBsum" id="1XH7"/>
<dbReference type="PDBsum" id="1XH8"/>
<dbReference type="PDBsum" id="1XH9"/>
<dbReference type="PDBsum" id="1XHA"/>
<dbReference type="PDBsum" id="1YDR"/>
<dbReference type="PDBsum" id="2C1A"/>
<dbReference type="PDBsum" id="2C1B"/>
<dbReference type="PDBsum" id="2F7E"/>
<dbReference type="PDBsum" id="2GNI"/>
<dbReference type="PDBsum" id="2JDS"/>
<dbReference type="PDBsum" id="2JDT"/>
<dbReference type="PDBsum" id="2JDV"/>
<dbReference type="PDBsum" id="2L1L"/>
<dbReference type="PDBsum" id="2UVX"/>
<dbReference type="PDBsum" id="2UVY"/>
<dbReference type="PDBsum" id="2UVZ"/>
<dbReference type="PDBsum" id="2UW0"/>
<dbReference type="PDBsum" id="2UW3"/>
<dbReference type="PDBsum" id="2UW4"/>
<dbReference type="PDBsum" id="2UW5"/>
<dbReference type="PDBsum" id="2UW6"/>
<dbReference type="PDBsum" id="2UW7"/>
<dbReference type="PDBsum" id="2UW8"/>
<dbReference type="PDBsum" id="2VNW"/>
<dbReference type="PDBsum" id="2VNY"/>
<dbReference type="PDBsum" id="2VO0"/>
<dbReference type="PDBsum" id="2VO3"/>
<dbReference type="PDBsum" id="2VO6"/>
<dbReference type="PDBsum" id="2VO7"/>
<dbReference type="PDBsum" id="3AMA"/>
<dbReference type="PDBsum" id="3AMB"/>
<dbReference type="PDBsum" id="3L9L"/>
<dbReference type="PDBsum" id="3L9M"/>
<dbReference type="PDBsum" id="3L9N"/>
<dbReference type="PDBsum" id="3MVJ"/>
<dbReference type="PDBsum" id="3NX8"/>
<dbReference type="PDBsum" id="3OOG"/>
<dbReference type="PDBsum" id="3OVV"/>
<dbReference type="PDBsum" id="3OWP"/>
<dbReference type="PDBsum" id="3OXT"/>
<dbReference type="PDBsum" id="3P0M"/>
<dbReference type="PDBsum" id="3POO"/>
<dbReference type="PDBsum" id="3VQH"/>
<dbReference type="PDBsum" id="3WYG"/>
<dbReference type="PDBsum" id="3X2U"/>
<dbReference type="PDBsum" id="3X2V"/>
<dbReference type="PDBsum" id="3X2W"/>
<dbReference type="PDBsum" id="4AXA"/>
<dbReference type="PDBsum" id="4IAC"/>
<dbReference type="PDBsum" id="4IAD"/>
<dbReference type="PDBsum" id="4IAF"/>
<dbReference type="PDBsum" id="4IAI"/>
<dbReference type="PDBsum" id="4IAK"/>
<dbReference type="PDBsum" id="4IAY"/>
<dbReference type="PDBsum" id="4IAZ"/>
<dbReference type="PDBsum" id="4IB0"/>
<dbReference type="PDBsum" id="4IB1"/>
<dbReference type="PDBsum" id="4IB3"/>
<dbReference type="PDBsum" id="4IE9"/>
<dbReference type="PDBsum" id="4IJ9"/>
<dbReference type="PDBsum" id="4O21"/>
<dbReference type="PDBsum" id="4O22"/>
<dbReference type="PDBsum" id="4UJ1"/>
<dbReference type="PDBsum" id="4UJ2"/>
<dbReference type="PDBsum" id="4UJ9"/>
<dbReference type="PDBsum" id="4UJA"/>
<dbReference type="PDBsum" id="4UJB"/>
<dbReference type="PDBsum" id="4WB5"/>
<dbReference type="PDBsum" id="4WB6"/>
<dbReference type="PDBsum" id="4WB7"/>
<dbReference type="PDBsum" id="4WB8"/>
<dbReference type="PDBsum" id="4Z83"/>
<dbReference type="PDBsum" id="4Z84"/>
<dbReference type="PDBsum" id="5BX6"/>
<dbReference type="PDBsum" id="5BX7"/>
<dbReference type="PDBsum" id="5DH9"/>
<dbReference type="PDBsum" id="5LCP"/>
<dbReference type="PDBsum" id="5LCQ"/>
<dbReference type="PDBsum" id="5LCR"/>
<dbReference type="PDBsum" id="5LCT"/>
<dbReference type="PDBsum" id="5LCU"/>
<dbReference type="PDBsum" id="5M0B"/>
<dbReference type="PDBsum" id="5M0C"/>
<dbReference type="PDBsum" id="5M0L"/>
<dbReference type="PDBsum" id="5M0U"/>
<dbReference type="PDBsum" id="5M6V"/>
<dbReference type="PDBsum" id="5M6Y"/>
<dbReference type="PDBsum" id="5M71"/>
<dbReference type="PDBsum" id="5M75"/>
<dbReference type="PDBsum" id="5N23"/>
<dbReference type="PDBsum" id="5XOJ"/>
<dbReference type="PDBsum" id="6E21"/>
<dbReference type="PDBsum" id="6E99"/>
<dbReference type="PDBsum" id="6E9L"/>
<dbReference type="PDBsum" id="6FRX"/>
<dbReference type="PDBsum" id="6QJ7"/>
<dbReference type="PDBsum" id="6X2U"/>
<dbReference type="PDBsum" id="6X2V"/>
<dbReference type="PDBsum" id="6X2W"/>
<dbReference type="PDBsum" id="7UJX"/>
<dbReference type="PDBsum" id="7V0G"/>
<dbReference type="PDBsum" id="8FE2"/>
<dbReference type="PDBsum" id="8FE5"/>
<dbReference type="PDBsum" id="8FEC"/>
<dbReference type="BMRB" id="P61925"/>
<dbReference type="SMR" id="P61925"/>
<dbReference type="BioGRID" id="111556">
    <property type="interactions" value="12"/>
</dbReference>
<dbReference type="DIP" id="DIP-56176N"/>
<dbReference type="ELM" id="P61925"/>
<dbReference type="FunCoup" id="P61925">
    <property type="interactions" value="2344"/>
</dbReference>
<dbReference type="IntAct" id="P61925">
    <property type="interactions" value="13"/>
</dbReference>
<dbReference type="MINT" id="P61925"/>
<dbReference type="STRING" id="9606.ENSP00000379696"/>
<dbReference type="DrugBank" id="DB07204">
    <property type="generic name" value="(1S)-1-(1H-INDOL-3-YLMETHYL)-2-(2-PYRIDIN-4-YL-[1,7]NAPHTYRIDIN-5-YLOXY)-EHYLAMINE"/>
</dbReference>
<dbReference type="DrugBank" id="DB07107">
    <property type="generic name" value="(1S)-2-(1H-INDOL-3-YL)-1-[({5-[(E)-2-PYRIDIN-4-YLVINYL]PYRIDIN-3-YL}OXY)METHYL]ETHYLAMINE"/>
</dbReference>
<dbReference type="DrugBank" id="DB07857">
    <property type="generic name" value="(2R)-2-(4-chlorophenyl)-2-[4-(1H-pyrazol-4-yl)phenyl]ethanamine"/>
</dbReference>
<dbReference type="DrugBank" id="DB07860">
    <property type="generic name" value="(2R)-2-(4-CHLOROPHENYL)-2-PHENYLETHANAMINE"/>
</dbReference>
<dbReference type="DrugBank" id="DB08073">
    <property type="generic name" value="(2S)-1-(1H-INDOL-3-YL)-3-{[5-(3-METHYL-1H-INDAZOL-5-YL)PYRIDIN-3-YL]OXY}PROPAN-2-AMINE"/>
</dbReference>
<dbReference type="DrugBank" id="DB06959">
    <property type="generic name" value="(2S)-1-(3H-Indol-3-yl)-3-{[5-(6-isoquinolinyl)-3-pyridinyl]oxy}-2-propanamine"/>
</dbReference>
<dbReference type="DrugBank" id="DB07858">
    <property type="generic name" value="(2S)-2-(4-chlorophenyl)-2-[4-(1H-pyrazol-4-yl)phenyl]ethanamine"/>
</dbReference>
<dbReference type="DrugBank" id="DB07583">
    <property type="generic name" value="(4R,2S)-5'-(4-(4-CHLOROBENZYLOXY)PYRROLIDIN-2-YLMETHANESULFONYL)ISOQUINOLINE"/>
</dbReference>
<dbReference type="DrugBank" id="DB07855">
    <property type="generic name" value="(S)-1-PHENYL-1-[4-(9H-PURIN-6-YL)PHENYL]METHANAMINE"/>
</dbReference>
<dbReference type="DrugBank" id="DB07876">
    <property type="generic name" value="(S)-2-METHYL-1-[(4-METHYL-5-ISOQUINOLINE)SULFONYL]-HOMOPIPERAZINE"/>
</dbReference>
<dbReference type="DrugBank" id="DB08149">
    <property type="generic name" value="1-[4-(4-chlorobenzyl)-1-(7H-pyrrolo[2,3-d]pyrimidin-4-yl)piperidin-4-yl]methanamine"/>
</dbReference>
<dbReference type="DrugBank" id="DB08148">
    <property type="generic name" value="1-[4-(4-chlorophenyl)-1-(7H-pyrrolo[2,3-d]pyrimidin-4-yl)piperidin-4-yl]methanamine"/>
</dbReference>
<dbReference type="DrugBank" id="DB08070">
    <property type="generic name" value="2-[4-(3-METHYL-1H-PYRAZOL-4-YL)PHENYL]ETHANAMINE"/>
</dbReference>
<dbReference type="DrugBank" id="DB03374">
    <property type="generic name" value="3,5-Diiodotyrosine"/>
</dbReference>
<dbReference type="DrugBank" id="DB08113">
    <property type="generic name" value="3-pyridin-4-yl-1H-indazole"/>
</dbReference>
<dbReference type="DrugBank" id="DB08569">
    <property type="generic name" value="3-PYRIDIN-4-YL-2,4-DIHYDRO-INDENO[1,2-.C.] PYRAZOLE"/>
</dbReference>
<dbReference type="DrugBank" id="DB08150">
    <property type="generic name" value="4-(4-chlorobenzyl)-1-(7H-pyrrolo[2,3-d]pyrimidin-4-yl)piperidin-4-aminium"/>
</dbReference>
<dbReference type="DrugBank" id="DB07859">
    <property type="generic name" value="4-(4-CHLOROPHENYL)-4-[4-(1H-PYRAZOL-4-YL)PHENYL]PIPERIDINE"/>
</dbReference>
<dbReference type="DrugBank" id="DB07996">
    <property type="generic name" value="5-(2-methylpiperazine-1-sulfonyl)isoquinoline"/>
</dbReference>
<dbReference type="DrugBank" id="DB08114">
    <property type="generic name" value="5-benzyl-1,3-thiazol-2-amine"/>
</dbReference>
<dbReference type="DrugBank" id="DB07856">
    <property type="generic name" value="6-{4-[4-(4-CHLOROPHENYL)PIPERIDIN-4-YL]PHENYL}-9H-PURINE"/>
</dbReference>
<dbReference type="DrugBank" id="DB08568">
    <property type="generic name" value="A-674563"/>
</dbReference>
<dbReference type="DrugBank" id="DB08162">
    <property type="generic name" value="Fasudil"/>
</dbReference>
<dbReference type="DrugBank" id="DB07995">
    <property type="generic name" value="H-89"/>
</dbReference>
<dbReference type="DrugBank" id="DB04707">
    <property type="generic name" value="Hydroxyfasudil"/>
</dbReference>
<dbReference type="DrugBank" id="DB07947">
    <property type="generic name" value="ISOQUINOLINE-5-SULFONIC ACID (2-(2-(4-CHLOROBENZYLOXY)ETHYLAMINO)ETHYL)AMIDE"/>
</dbReference>
<dbReference type="DrugBank" id="DB08231">
    <property type="generic name" value="Myristic acid"/>
</dbReference>
<dbReference type="DrugBank" id="DB07997">
    <property type="generic name" value="N-[2-(METHYLAMINO)ETHYL]-5-ISOQUINOLINESULFONAMIDE"/>
</dbReference>
<dbReference type="DrugBank" id="DB07854">
    <property type="generic name" value="N-METHYL-1-[4-(9H-PURIN-6-YL)PHENYL]METHANAMINE"/>
</dbReference>
<dbReference type="DrugBank" id="DB08756">
    <property type="generic name" value="Y-27632"/>
</dbReference>
<dbReference type="iPTMnet" id="P61925"/>
<dbReference type="PhosphoSitePlus" id="P61925"/>
<dbReference type="BioMuta" id="PKIA"/>
<dbReference type="DMDM" id="48428970"/>
<dbReference type="jPOST" id="P61925"/>
<dbReference type="MassIVE" id="P61925"/>
<dbReference type="PaxDb" id="9606-ENSP00000379696"/>
<dbReference type="PeptideAtlas" id="P61925"/>
<dbReference type="ProteomicsDB" id="57339"/>
<dbReference type="Pumba" id="P61925"/>
<dbReference type="Antibodypedia" id="52148">
    <property type="antibodies" value="63 antibodies from 17 providers"/>
</dbReference>
<dbReference type="DNASU" id="5569"/>
<dbReference type="Ensembl" id="ENST00000352966.9">
    <property type="protein sequence ID" value="ENSP00000336552.5"/>
    <property type="gene ID" value="ENSG00000171033.13"/>
</dbReference>
<dbReference type="Ensembl" id="ENST00000396418.7">
    <property type="protein sequence ID" value="ENSP00000379696.2"/>
    <property type="gene ID" value="ENSG00000171033.13"/>
</dbReference>
<dbReference type="Ensembl" id="ENST00000518467.1">
    <property type="protein sequence ID" value="ENSP00000430887.1"/>
    <property type="gene ID" value="ENSG00000171033.13"/>
</dbReference>
<dbReference type="GeneID" id="5569"/>
<dbReference type="KEGG" id="hsa:5569"/>
<dbReference type="MANE-Select" id="ENST00000396418.7">
    <property type="protein sequence ID" value="ENSP00000379696.2"/>
    <property type="RefSeq nucleotide sequence ID" value="NM_006823.4"/>
    <property type="RefSeq protein sequence ID" value="NP_006814.1"/>
</dbReference>
<dbReference type="UCSC" id="uc003yba.4">
    <property type="organism name" value="human"/>
</dbReference>
<dbReference type="AGR" id="HGNC:9017"/>
<dbReference type="CTD" id="5569"/>
<dbReference type="DisGeNET" id="5569"/>
<dbReference type="GeneCards" id="PKIA"/>
<dbReference type="HGNC" id="HGNC:9017">
    <property type="gene designation" value="PKIA"/>
</dbReference>
<dbReference type="HPA" id="ENSG00000171033">
    <property type="expression patterns" value="Group enriched (skeletal muscle, tongue)"/>
</dbReference>
<dbReference type="MIM" id="606059">
    <property type="type" value="gene"/>
</dbReference>
<dbReference type="neXtProt" id="NX_P61925"/>
<dbReference type="OpenTargets" id="ENSG00000171033"/>
<dbReference type="PharmGKB" id="PA33349"/>
<dbReference type="VEuPathDB" id="HostDB:ENSG00000171033"/>
<dbReference type="eggNOG" id="ENOG502S6JP">
    <property type="taxonomic scope" value="Eukaryota"/>
</dbReference>
<dbReference type="GeneTree" id="ENSGT00530000064276"/>
<dbReference type="HOGENOM" id="CLU_163471_2_0_1"/>
<dbReference type="InParanoid" id="P61925"/>
<dbReference type="OMA" id="HYKNHFS"/>
<dbReference type="OrthoDB" id="9934738at2759"/>
<dbReference type="PAN-GO" id="P61925">
    <property type="GO annotations" value="4 GO annotations based on evolutionary models"/>
</dbReference>
<dbReference type="PhylomeDB" id="P61925"/>
<dbReference type="TreeFam" id="TF330809"/>
<dbReference type="BRENDA" id="2.7.11.11">
    <property type="organism ID" value="2681"/>
</dbReference>
<dbReference type="PathwayCommons" id="P61925"/>
<dbReference type="SABIO-RK" id="P61925"/>
<dbReference type="SignaLink" id="P61925"/>
<dbReference type="SIGNOR" id="P61925"/>
<dbReference type="BioGRID-ORCS" id="5569">
    <property type="hits" value="12 hits in 1141 CRISPR screens"/>
</dbReference>
<dbReference type="ChiTaRS" id="PKIA">
    <property type="organism name" value="human"/>
</dbReference>
<dbReference type="EvolutionaryTrace" id="P61925"/>
<dbReference type="GeneWiki" id="PKIA"/>
<dbReference type="GenomeRNAi" id="5569"/>
<dbReference type="Pharos" id="P61925">
    <property type="development level" value="Tbio"/>
</dbReference>
<dbReference type="PRO" id="PR:P61925"/>
<dbReference type="Proteomes" id="UP000005640">
    <property type="component" value="Chromosome 8"/>
</dbReference>
<dbReference type="RNAct" id="P61925">
    <property type="molecule type" value="protein"/>
</dbReference>
<dbReference type="Bgee" id="ENSG00000171033">
    <property type="expression patterns" value="Expressed in biceps brachii and 205 other cell types or tissues"/>
</dbReference>
<dbReference type="ExpressionAtlas" id="P61925">
    <property type="expression patterns" value="baseline and differential"/>
</dbReference>
<dbReference type="GO" id="GO:0005737">
    <property type="term" value="C:cytoplasm"/>
    <property type="evidence" value="ECO:0000318"/>
    <property type="project" value="GO_Central"/>
</dbReference>
<dbReference type="GO" id="GO:0005634">
    <property type="term" value="C:nucleus"/>
    <property type="evidence" value="ECO:0000318"/>
    <property type="project" value="GO_Central"/>
</dbReference>
<dbReference type="GO" id="GO:0004862">
    <property type="term" value="F:cAMP-dependent protein kinase inhibitor activity"/>
    <property type="evidence" value="ECO:0000314"/>
    <property type="project" value="BHF-UCL"/>
</dbReference>
<dbReference type="GO" id="GO:0034236">
    <property type="term" value="F:protein kinase A catalytic subunit binding"/>
    <property type="evidence" value="ECO:0000353"/>
    <property type="project" value="BHF-UCL"/>
</dbReference>
<dbReference type="GO" id="GO:2000480">
    <property type="term" value="P:negative regulation of cAMP-dependent protein kinase activity"/>
    <property type="evidence" value="ECO:0000314"/>
    <property type="project" value="MGI"/>
</dbReference>
<dbReference type="GO" id="GO:0141162">
    <property type="term" value="P:negative regulation of cAMP/PKA signal transduction"/>
    <property type="evidence" value="ECO:0000314"/>
    <property type="project" value="BHF-UCL"/>
</dbReference>
<dbReference type="GO" id="GO:0042308">
    <property type="term" value="P:negative regulation of protein import into nucleus"/>
    <property type="evidence" value="ECO:0007669"/>
    <property type="project" value="Ensembl"/>
</dbReference>
<dbReference type="GO" id="GO:0000122">
    <property type="term" value="P:negative regulation of transcription by RNA polymerase II"/>
    <property type="evidence" value="ECO:0007669"/>
    <property type="project" value="Ensembl"/>
</dbReference>
<dbReference type="GO" id="GO:0010389">
    <property type="term" value="P:regulation of G2/M transition of mitotic cell cycle"/>
    <property type="evidence" value="ECO:0007669"/>
    <property type="project" value="Ensembl"/>
</dbReference>
<dbReference type="DisProt" id="DP00934"/>
<dbReference type="IDEAL" id="IID00349"/>
<dbReference type="InterPro" id="IPR004171">
    <property type="entry name" value="cAMP_dep_PKI"/>
</dbReference>
<dbReference type="PANTHER" id="PTHR15416">
    <property type="entry name" value="CAMP-DEPENDENT PROTEIN KINASE INHIBITOR/PKI"/>
    <property type="match status" value="1"/>
</dbReference>
<dbReference type="Pfam" id="PF02827">
    <property type="entry name" value="PKI"/>
    <property type="match status" value="1"/>
</dbReference>
<dbReference type="PIRSF" id="PIRSF001667">
    <property type="entry name" value="PKI"/>
    <property type="match status" value="1"/>
</dbReference>
<sequence>MTDVETTYADFIASGRTGRRNAIHDILVSSASGNSNELALKLAGLDINKTEGEEDAQRSSTEQSGEAQGEAAKSES</sequence>
<gene>
    <name type="primary">PKIA</name>
    <name type="synonym">PRKACN1</name>
</gene>
<reference key="1">
    <citation type="journal article" date="1991" name="Mol. Endocrinol.">
        <title>Inhibition of protein kinase-A by overexpression of the cloned human protein kinase inhibitor.</title>
        <authorList>
            <person name="Olsen S.R."/>
            <person name="Uhler M.D."/>
        </authorList>
    </citation>
    <scope>NUCLEOTIDE SEQUENCE [MRNA]</scope>
</reference>
<reference key="2">
    <citation type="submission" date="2000-02" db="EMBL/GenBank/DDBJ databases">
        <authorList>
            <person name="Knoell R."/>
        </authorList>
    </citation>
    <scope>NUCLEOTIDE SEQUENCE [GENOMIC DNA]</scope>
</reference>
<reference key="3">
    <citation type="submission" date="2004-06" db="EMBL/GenBank/DDBJ databases">
        <title>Cloning of human full open reading frames in Gateway(TM) system entry vector (pDONR201).</title>
        <authorList>
            <person name="Ebert L."/>
            <person name="Schick M."/>
            <person name="Neubert P."/>
            <person name="Schatten R."/>
            <person name="Henze S."/>
            <person name="Korn B."/>
        </authorList>
    </citation>
    <scope>NUCLEOTIDE SEQUENCE [LARGE SCALE MRNA]</scope>
</reference>
<reference key="4">
    <citation type="journal article" date="2004" name="Genome Res.">
        <title>The status, quality, and expansion of the NIH full-length cDNA project: the Mammalian Gene Collection (MGC).</title>
        <authorList>
            <consortium name="The MGC Project Team"/>
        </authorList>
    </citation>
    <scope>NUCLEOTIDE SEQUENCE [LARGE SCALE MRNA]</scope>
    <source>
        <tissue>Skeletal muscle</tissue>
    </source>
</reference>
<reference key="5">
    <citation type="journal article" date="2012" name="Proc. Natl. Acad. Sci. U.S.A.">
        <title>N-terminal acetylome analyses and functional insights of the N-terminal acetyltransferase NatB.</title>
        <authorList>
            <person name="Van Damme P."/>
            <person name="Lasa M."/>
            <person name="Polevoda B."/>
            <person name="Gazquez C."/>
            <person name="Elosegui-Artola A."/>
            <person name="Kim D.S."/>
            <person name="De Juan-Pardo E."/>
            <person name="Demeyer K."/>
            <person name="Hole K."/>
            <person name="Larrea E."/>
            <person name="Timmerman E."/>
            <person name="Prieto J."/>
            <person name="Arnesen T."/>
            <person name="Sherman F."/>
            <person name="Gevaert K."/>
            <person name="Aldabe R."/>
        </authorList>
    </citation>
    <scope>ACETYLATION [LARGE SCALE ANALYSIS] AT THR-2</scope>
    <scope>CLEAVAGE OF INITIATOR METHIONINE [LARGE SCALE ANALYSIS]</scope>
    <scope>IDENTIFICATION BY MASS SPECTROMETRY [LARGE SCALE ANALYSIS]</scope>
</reference>
<evidence type="ECO:0000250" key="1"/>
<evidence type="ECO:0000256" key="2">
    <source>
        <dbReference type="SAM" id="MobiDB-lite"/>
    </source>
</evidence>
<evidence type="ECO:0000305" key="3"/>
<evidence type="ECO:0007744" key="4">
    <source>
    </source>
</evidence>
<evidence type="ECO:0007829" key="5">
    <source>
        <dbReference type="PDB" id="1CMK"/>
    </source>
</evidence>
<evidence type="ECO:0007829" key="6">
    <source>
        <dbReference type="PDB" id="2L1L"/>
    </source>
</evidence>
<evidence type="ECO:0007829" key="7">
    <source>
        <dbReference type="PDB" id="3WYG"/>
    </source>
</evidence>
<evidence type="ECO:0007829" key="8">
    <source>
        <dbReference type="PDB" id="5M0U"/>
    </source>
</evidence>
<evidence type="ECO:0007829" key="9">
    <source>
        <dbReference type="PDB" id="5M6Y"/>
    </source>
</evidence>
<comment type="function">
    <text>Extremely potent competitive inhibitor of cAMP-dependent protein kinase activity, this protein interacts with the catalytic subunit of the enzyme after the cAMP-induced dissociation of its regulatory chains.</text>
</comment>
<comment type="interaction">
    <interactant intactId="EBI-2682139">
        <id>P61925</id>
    </interactant>
    <interactant intactId="EBI-718729">
        <id>P55212</id>
        <label>CASP6</label>
    </interactant>
    <organismsDiffer>false</organismsDiffer>
    <experiments>3</experiments>
</comment>
<comment type="interaction">
    <interactant intactId="EBI-2682139">
        <id>P61925</id>
    </interactant>
    <interactant intactId="EBI-349105">
        <id>P63167</id>
        <label>DYNLL1</label>
    </interactant>
    <organismsDiffer>false</organismsDiffer>
    <experiments>3</experiments>
</comment>
<comment type="interaction">
    <interactant intactId="EBI-2682139">
        <id>P61925</id>
    </interactant>
    <interactant intactId="EBI-742371">
        <id>Q96FJ2</id>
        <label>DYNLL2</label>
    </interactant>
    <organismsDiffer>false</organismsDiffer>
    <experiments>3</experiments>
</comment>
<comment type="interaction">
    <interactant intactId="EBI-2682139">
        <id>P61925</id>
    </interactant>
    <interactant intactId="EBI-2857471">
        <id>Q6NTE8</id>
        <label>MRNIP</label>
    </interactant>
    <organismsDiffer>false</organismsDiffer>
    <experiments>3</experiments>
</comment>
<comment type="interaction">
    <interactant intactId="EBI-2682139">
        <id>P61925</id>
    </interactant>
    <interactant intactId="EBI-741137">
        <id>O43663</id>
        <label>PRC1</label>
    </interactant>
    <organismsDiffer>false</organismsDiffer>
    <experiments>3</experiments>
</comment>
<comment type="interaction">
    <interactant intactId="EBI-2682139">
        <id>P61925</id>
    </interactant>
    <interactant intactId="EBI-2679622">
        <id>P22694</id>
        <label>PRKACB</label>
    </interactant>
    <organismsDiffer>false</organismsDiffer>
    <experiments>5</experiments>
</comment>
<comment type="interaction">
    <interactant intactId="EBI-2682139">
        <id>P61925</id>
    </interactant>
    <interactant intactId="EBI-355867">
        <id>O14980</id>
        <label>XPO1</label>
    </interactant>
    <organismsDiffer>false</organismsDiffer>
    <experiments>2</experiments>
</comment>
<comment type="interaction">
    <interactant intactId="EBI-2682139">
        <id>P61925</id>
    </interactant>
    <interactant intactId="EBI-20589">
        <id>P30822</id>
        <label>CRM1</label>
    </interactant>
    <organismsDiffer>true</organismsDiffer>
    <experiments>17</experiments>
</comment>
<comment type="interaction">
    <interactant intactId="EBI-2682139">
        <id>P61925</id>
    </interactant>
    <interactant intactId="EBI-2550236">
        <id>Q6P5F9</id>
        <label>Xpo1</label>
    </interactant>
    <organismsDiffer>true</organismsDiffer>
    <experiments>4</experiments>
</comment>
<comment type="miscellaneous">
    <text>The inhibitory site contains regions very similar to the hinge regions (sites that directly interact with the enzyme active site) and 'pseudosubstrate site' of the regulatory chains; but, unlike these chains, PKI does not contain cAMP-binding sites. The arginine residues within the inhibitory site are essential for inhibition and recognition of the enzyme active site.</text>
</comment>
<comment type="similarity">
    <text evidence="3">Belongs to the PKI family.</text>
</comment>
<proteinExistence type="evidence at protein level"/>
<protein>
    <recommendedName>
        <fullName>cAMP-dependent protein kinase inhibitor alpha</fullName>
        <shortName>PKI-alpha</shortName>
    </recommendedName>
    <alternativeName>
        <fullName>cAMP-dependent protein kinase inhibitor, muscle/brain isoform</fullName>
    </alternativeName>
</protein>